<proteinExistence type="inferred from homology"/>
<feature type="chain" id="PRO_0000259290" description="D-aminoacyl-tRNA deacylase">
    <location>
        <begin position="1"/>
        <end position="148"/>
    </location>
</feature>
<feature type="short sequence motif" description="Gly-cisPro motif, important for rejection of L-amino acids" evidence="1">
    <location>
        <begin position="137"/>
        <end position="138"/>
    </location>
</feature>
<comment type="function">
    <text evidence="1">An aminoacyl-tRNA editing enzyme that deacylates mischarged D-aminoacyl-tRNAs. Also deacylates mischarged glycyl-tRNA(Ala), protecting cells against glycine mischarging by AlaRS. Acts via tRNA-based rather than protein-based catalysis; rejects L-amino acids rather than detecting D-amino acids in the active site. By recycling D-aminoacyl-tRNA to D-amino acids and free tRNA molecules, this enzyme counteracts the toxicity associated with the formation of D-aminoacyl-tRNA entities in vivo and helps enforce protein L-homochirality.</text>
</comment>
<comment type="catalytic activity">
    <reaction evidence="1">
        <text>glycyl-tRNA(Ala) + H2O = tRNA(Ala) + glycine + H(+)</text>
        <dbReference type="Rhea" id="RHEA:53744"/>
        <dbReference type="Rhea" id="RHEA-COMP:9657"/>
        <dbReference type="Rhea" id="RHEA-COMP:13640"/>
        <dbReference type="ChEBI" id="CHEBI:15377"/>
        <dbReference type="ChEBI" id="CHEBI:15378"/>
        <dbReference type="ChEBI" id="CHEBI:57305"/>
        <dbReference type="ChEBI" id="CHEBI:78442"/>
        <dbReference type="ChEBI" id="CHEBI:78522"/>
        <dbReference type="EC" id="3.1.1.96"/>
    </reaction>
</comment>
<comment type="catalytic activity">
    <reaction evidence="1">
        <text>a D-aminoacyl-tRNA + H2O = a tRNA + a D-alpha-amino acid + H(+)</text>
        <dbReference type="Rhea" id="RHEA:13953"/>
        <dbReference type="Rhea" id="RHEA-COMP:10123"/>
        <dbReference type="Rhea" id="RHEA-COMP:10124"/>
        <dbReference type="ChEBI" id="CHEBI:15377"/>
        <dbReference type="ChEBI" id="CHEBI:15378"/>
        <dbReference type="ChEBI" id="CHEBI:59871"/>
        <dbReference type="ChEBI" id="CHEBI:78442"/>
        <dbReference type="ChEBI" id="CHEBI:79333"/>
        <dbReference type="EC" id="3.1.1.96"/>
    </reaction>
</comment>
<comment type="subunit">
    <text evidence="1">Homodimer.</text>
</comment>
<comment type="subcellular location">
    <subcellularLocation>
        <location evidence="1">Cytoplasm</location>
    </subcellularLocation>
</comment>
<comment type="domain">
    <text evidence="1">A Gly-cisPro motif from one monomer fits into the active site of the other monomer to allow specific chiral rejection of L-amino acids.</text>
</comment>
<comment type="similarity">
    <text evidence="1">Belongs to the DTD family.</text>
</comment>
<dbReference type="EC" id="3.1.1.96" evidence="1"/>
<dbReference type="EMBL" id="CP000233">
    <property type="protein sequence ID" value="ABD99633.1"/>
    <property type="molecule type" value="Genomic_DNA"/>
</dbReference>
<dbReference type="RefSeq" id="WP_011475975.1">
    <property type="nucleotide sequence ID" value="NC_007929.1"/>
</dbReference>
<dbReference type="RefSeq" id="YP_535716.1">
    <property type="nucleotide sequence ID" value="NC_007929.1"/>
</dbReference>
<dbReference type="SMR" id="Q1WTX9"/>
<dbReference type="STRING" id="362948.LSL_0823"/>
<dbReference type="KEGG" id="lsl:LSL_0823"/>
<dbReference type="PATRIC" id="fig|362948.14.peg.897"/>
<dbReference type="HOGENOM" id="CLU_076901_1_0_9"/>
<dbReference type="OrthoDB" id="9801395at2"/>
<dbReference type="Proteomes" id="UP000006559">
    <property type="component" value="Chromosome"/>
</dbReference>
<dbReference type="GO" id="GO:0005737">
    <property type="term" value="C:cytoplasm"/>
    <property type="evidence" value="ECO:0007669"/>
    <property type="project" value="UniProtKB-SubCell"/>
</dbReference>
<dbReference type="GO" id="GO:0051500">
    <property type="term" value="F:D-tyrosyl-tRNA(Tyr) deacylase activity"/>
    <property type="evidence" value="ECO:0007669"/>
    <property type="project" value="TreeGrafter"/>
</dbReference>
<dbReference type="GO" id="GO:0106026">
    <property type="term" value="F:Gly-tRNA(Ala) deacylase activity"/>
    <property type="evidence" value="ECO:0007669"/>
    <property type="project" value="UniProtKB-UniRule"/>
</dbReference>
<dbReference type="GO" id="GO:0043908">
    <property type="term" value="F:Ser(Gly)-tRNA(Ala) hydrolase activity"/>
    <property type="evidence" value="ECO:0007669"/>
    <property type="project" value="UniProtKB-UniRule"/>
</dbReference>
<dbReference type="GO" id="GO:0000049">
    <property type="term" value="F:tRNA binding"/>
    <property type="evidence" value="ECO:0007669"/>
    <property type="project" value="UniProtKB-UniRule"/>
</dbReference>
<dbReference type="GO" id="GO:0019478">
    <property type="term" value="P:D-amino acid catabolic process"/>
    <property type="evidence" value="ECO:0007669"/>
    <property type="project" value="UniProtKB-UniRule"/>
</dbReference>
<dbReference type="CDD" id="cd00563">
    <property type="entry name" value="Dtyr_deacylase"/>
    <property type="match status" value="1"/>
</dbReference>
<dbReference type="FunFam" id="3.50.80.10:FF:000001">
    <property type="entry name" value="D-aminoacyl-tRNA deacylase"/>
    <property type="match status" value="1"/>
</dbReference>
<dbReference type="Gene3D" id="3.50.80.10">
    <property type="entry name" value="D-tyrosyl-tRNA(Tyr) deacylase"/>
    <property type="match status" value="1"/>
</dbReference>
<dbReference type="HAMAP" id="MF_00518">
    <property type="entry name" value="Deacylase_Dtd"/>
    <property type="match status" value="1"/>
</dbReference>
<dbReference type="InterPro" id="IPR003732">
    <property type="entry name" value="Daa-tRNA_deacyls_DTD"/>
</dbReference>
<dbReference type="InterPro" id="IPR023509">
    <property type="entry name" value="DTD-like_sf"/>
</dbReference>
<dbReference type="NCBIfam" id="TIGR00256">
    <property type="entry name" value="D-aminoacyl-tRNA deacylase"/>
    <property type="match status" value="1"/>
</dbReference>
<dbReference type="PANTHER" id="PTHR10472:SF5">
    <property type="entry name" value="D-AMINOACYL-TRNA DEACYLASE 1"/>
    <property type="match status" value="1"/>
</dbReference>
<dbReference type="PANTHER" id="PTHR10472">
    <property type="entry name" value="D-TYROSYL-TRNA TYR DEACYLASE"/>
    <property type="match status" value="1"/>
</dbReference>
<dbReference type="Pfam" id="PF02580">
    <property type="entry name" value="Tyr_Deacylase"/>
    <property type="match status" value="1"/>
</dbReference>
<dbReference type="SUPFAM" id="SSF69500">
    <property type="entry name" value="DTD-like"/>
    <property type="match status" value="1"/>
</dbReference>
<gene>
    <name evidence="1" type="primary">dtd</name>
    <name type="ordered locus">LSL_0823</name>
</gene>
<name>DTD_LIGS1</name>
<reference key="1">
    <citation type="journal article" date="2006" name="Proc. Natl. Acad. Sci. U.S.A.">
        <title>Multireplicon genome architecture of Lactobacillus salivarius.</title>
        <authorList>
            <person name="Claesson M.J."/>
            <person name="Li Y."/>
            <person name="Leahy S."/>
            <person name="Canchaya C."/>
            <person name="van Pijkeren J.P."/>
            <person name="Cerdeno-Tarraga A.M."/>
            <person name="Parkhill J."/>
            <person name="Flynn S."/>
            <person name="O'Sullivan G.C."/>
            <person name="Collins J.K."/>
            <person name="Higgins D."/>
            <person name="Shanahan F."/>
            <person name="Fitzgerald G.F."/>
            <person name="van Sinderen D."/>
            <person name="O'Toole P.W."/>
        </authorList>
    </citation>
    <scope>NUCLEOTIDE SEQUENCE [LARGE SCALE GENOMIC DNA]</scope>
    <source>
        <strain>UCC118</strain>
    </source>
</reference>
<organism>
    <name type="scientific">Ligilactobacillus salivarius (strain UCC118)</name>
    <name type="common">Lactobacillus salivarius</name>
    <dbReference type="NCBI Taxonomy" id="362948"/>
    <lineage>
        <taxon>Bacteria</taxon>
        <taxon>Bacillati</taxon>
        <taxon>Bacillota</taxon>
        <taxon>Bacilli</taxon>
        <taxon>Lactobacillales</taxon>
        <taxon>Lactobacillaceae</taxon>
        <taxon>Ligilactobacillus</taxon>
    </lineage>
</organism>
<sequence>MRVLLQRVKQASVEIDGNVNGEIGQGLLLLVGFTENDGDKEIEYLARKVLNARIFSDADDKMNLSLQQVSGSILSISQFTLYAQTRKGNRPSFTRAQNPDIASKNYDKFNEKLRESGVQVETGIFGADMQVSLVNDGPVTIMYDTDEE</sequence>
<evidence type="ECO:0000255" key="1">
    <source>
        <dbReference type="HAMAP-Rule" id="MF_00518"/>
    </source>
</evidence>
<keyword id="KW-0963">Cytoplasm</keyword>
<keyword id="KW-0378">Hydrolase</keyword>
<keyword id="KW-1185">Reference proteome</keyword>
<keyword id="KW-0694">RNA-binding</keyword>
<keyword id="KW-0820">tRNA-binding</keyword>
<protein>
    <recommendedName>
        <fullName evidence="1">D-aminoacyl-tRNA deacylase</fullName>
        <shortName evidence="1">DTD</shortName>
        <ecNumber evidence="1">3.1.1.96</ecNumber>
    </recommendedName>
    <alternativeName>
        <fullName evidence="1">Gly-tRNA(Ala) deacylase</fullName>
    </alternativeName>
</protein>
<accession>Q1WTX9</accession>